<feature type="chain" id="PRO_0000197929" description="Vitamin B6 transporter TPN1">
    <location>
        <begin position="1"/>
        <end position="579"/>
    </location>
</feature>
<feature type="topological domain" description="Cytoplasmic" evidence="1">
    <location>
        <begin position="1"/>
        <end position="98"/>
    </location>
</feature>
<feature type="transmembrane region" description="Helical" evidence="1">
    <location>
        <begin position="99"/>
        <end position="119"/>
    </location>
</feature>
<feature type="topological domain" description="Extracellular" evidence="1">
    <location>
        <begin position="120"/>
        <end position="122"/>
    </location>
</feature>
<feature type="transmembrane region" description="Helical" evidence="1">
    <location>
        <begin position="123"/>
        <end position="143"/>
    </location>
</feature>
<feature type="topological domain" description="Cytoplasmic" evidence="1">
    <location>
        <begin position="144"/>
        <end position="157"/>
    </location>
</feature>
<feature type="transmembrane region" description="Helical" evidence="1">
    <location>
        <begin position="158"/>
        <end position="178"/>
    </location>
</feature>
<feature type="topological domain" description="Extracellular" evidence="1">
    <location>
        <begin position="179"/>
        <end position="198"/>
    </location>
</feature>
<feature type="transmembrane region" description="Helical" evidence="1">
    <location>
        <begin position="199"/>
        <end position="219"/>
    </location>
</feature>
<feature type="topological domain" description="Cytoplasmic" evidence="1">
    <location>
        <begin position="220"/>
        <end position="221"/>
    </location>
</feature>
<feature type="transmembrane region" description="Helical" evidence="1">
    <location>
        <begin position="222"/>
        <end position="242"/>
    </location>
</feature>
<feature type="topological domain" description="Extracellular" evidence="1">
    <location>
        <begin position="243"/>
        <end position="274"/>
    </location>
</feature>
<feature type="transmembrane region" description="Helical" evidence="1">
    <location>
        <begin position="275"/>
        <end position="295"/>
    </location>
</feature>
<feature type="topological domain" description="Cytoplasmic" evidence="1">
    <location>
        <begin position="296"/>
        <end position="302"/>
    </location>
</feature>
<feature type="transmembrane region" description="Helical" evidence="1">
    <location>
        <begin position="303"/>
        <end position="323"/>
    </location>
</feature>
<feature type="topological domain" description="Extracellular" evidence="1">
    <location>
        <begin position="324"/>
        <end position="362"/>
    </location>
</feature>
<feature type="transmembrane region" description="Helical" evidence="1">
    <location>
        <begin position="363"/>
        <end position="383"/>
    </location>
</feature>
<feature type="topological domain" description="Cytoplasmic" evidence="1">
    <location>
        <begin position="384"/>
        <end position="394"/>
    </location>
</feature>
<feature type="transmembrane region" description="Helical" evidence="1">
    <location>
        <begin position="395"/>
        <end position="415"/>
    </location>
</feature>
<feature type="topological domain" description="Extracellular" evidence="1">
    <location>
        <begin position="416"/>
        <end position="421"/>
    </location>
</feature>
<feature type="transmembrane region" description="Helical" evidence="1">
    <location>
        <begin position="422"/>
        <end position="442"/>
    </location>
</feature>
<feature type="topological domain" description="Cytoplasmic" evidence="1">
    <location>
        <begin position="443"/>
        <end position="519"/>
    </location>
</feature>
<feature type="transmembrane region" description="Helical" evidence="1">
    <location>
        <begin position="520"/>
        <end position="540"/>
    </location>
</feature>
<feature type="topological domain" description="Extracellular" evidence="1">
    <location>
        <begin position="541"/>
        <end position="545"/>
    </location>
</feature>
<feature type="transmembrane region" description="Helical" evidence="1">
    <location>
        <begin position="546"/>
        <end position="566"/>
    </location>
</feature>
<feature type="topological domain" description="Cytoplasmic" evidence="1">
    <location>
        <begin position="567"/>
        <end position="579"/>
    </location>
</feature>
<proteinExistence type="evidence at protein level"/>
<reference key="1">
    <citation type="journal article" date="2003" name="J. Biol. Chem.">
        <title>Tpn1p, the plasma membrane vitamin B6 transporter of Saccharomyces cerevisiae.</title>
        <authorList>
            <person name="Stolz J."/>
            <person name="Vielreicher M."/>
        </authorList>
    </citation>
    <scope>NUCLEOTIDE SEQUENCE [GENOMIC DNA]</scope>
    <scope>FUNCTION</scope>
    <scope>SUBCELLULAR LOCATION</scope>
    <source>
        <strain>ATCC 208353 / W303-1A</strain>
    </source>
</reference>
<reference key="2">
    <citation type="journal article" date="1997" name="Yeast">
        <title>Sequencing of a 40.5 kb fragment located on the left arm of chromosome VII from Saccharomyces cerevisiae.</title>
        <authorList>
            <person name="Coglievina M."/>
            <person name="Klima R."/>
            <person name="Bertani I."/>
            <person name="Delneri D."/>
            <person name="Zaccaria P."/>
            <person name="Bruschi C.V."/>
        </authorList>
    </citation>
    <scope>NUCLEOTIDE SEQUENCE [GENOMIC DNA]</scope>
    <source>
        <strain>ATCC 96604 / S288c / FY1679</strain>
    </source>
</reference>
<reference key="3">
    <citation type="journal article" date="1997" name="Nature">
        <title>The nucleotide sequence of Saccharomyces cerevisiae chromosome VII.</title>
        <authorList>
            <person name="Tettelin H."/>
            <person name="Agostoni-Carbone M.L."/>
            <person name="Albermann K."/>
            <person name="Albers M."/>
            <person name="Arroyo J."/>
            <person name="Backes U."/>
            <person name="Barreiros T."/>
            <person name="Bertani I."/>
            <person name="Bjourson A.J."/>
            <person name="Brueckner M."/>
            <person name="Bruschi C.V."/>
            <person name="Carignani G."/>
            <person name="Castagnoli L."/>
            <person name="Cerdan E."/>
            <person name="Clemente M.L."/>
            <person name="Coblenz A."/>
            <person name="Coglievina M."/>
            <person name="Coissac E."/>
            <person name="Defoor E."/>
            <person name="Del Bino S."/>
            <person name="Delius H."/>
            <person name="Delneri D."/>
            <person name="de Wergifosse P."/>
            <person name="Dujon B."/>
            <person name="Durand P."/>
            <person name="Entian K.-D."/>
            <person name="Eraso P."/>
            <person name="Escribano V."/>
            <person name="Fabiani L."/>
            <person name="Fartmann B."/>
            <person name="Feroli F."/>
            <person name="Feuermann M."/>
            <person name="Frontali L."/>
            <person name="Garcia-Gonzalez M."/>
            <person name="Garcia-Saez M.I."/>
            <person name="Goffeau A."/>
            <person name="Guerreiro P."/>
            <person name="Hani J."/>
            <person name="Hansen M."/>
            <person name="Hebling U."/>
            <person name="Hernandez K."/>
            <person name="Heumann K."/>
            <person name="Hilger F."/>
            <person name="Hofmann B."/>
            <person name="Indge K.J."/>
            <person name="James C.M."/>
            <person name="Klima R."/>
            <person name="Koetter P."/>
            <person name="Kramer B."/>
            <person name="Kramer W."/>
            <person name="Lauquin G."/>
            <person name="Leuther H."/>
            <person name="Louis E.J."/>
            <person name="Maillier E."/>
            <person name="Marconi A."/>
            <person name="Martegani E."/>
            <person name="Mazon M.J."/>
            <person name="Mazzoni C."/>
            <person name="McReynolds A.D.K."/>
            <person name="Melchioretto P."/>
            <person name="Mewes H.-W."/>
            <person name="Minenkova O."/>
            <person name="Mueller-Auer S."/>
            <person name="Nawrocki A."/>
            <person name="Netter P."/>
            <person name="Neu R."/>
            <person name="Nombela C."/>
            <person name="Oliver S.G."/>
            <person name="Panzeri L."/>
            <person name="Paoluzi S."/>
            <person name="Plevani P."/>
            <person name="Portetelle D."/>
            <person name="Portillo F."/>
            <person name="Potier S."/>
            <person name="Purnelle B."/>
            <person name="Rieger M."/>
            <person name="Riles L."/>
            <person name="Rinaldi T."/>
            <person name="Robben J."/>
            <person name="Rodrigues-Pousada C."/>
            <person name="Rodriguez-Belmonte E."/>
            <person name="Rodriguez-Torres A.M."/>
            <person name="Rose M."/>
            <person name="Ruzzi M."/>
            <person name="Saliola M."/>
            <person name="Sanchez-Perez M."/>
            <person name="Schaefer B."/>
            <person name="Schaefer M."/>
            <person name="Scharfe M."/>
            <person name="Schmidheini T."/>
            <person name="Schreer A."/>
            <person name="Skala J."/>
            <person name="Souciet J.-L."/>
            <person name="Steensma H.Y."/>
            <person name="Talla E."/>
            <person name="Thierry A."/>
            <person name="Vandenbol M."/>
            <person name="van der Aart Q.J.M."/>
            <person name="Van Dyck L."/>
            <person name="Vanoni M."/>
            <person name="Verhasselt P."/>
            <person name="Voet M."/>
            <person name="Volckaert G."/>
            <person name="Wambutt R."/>
            <person name="Watson M.D."/>
            <person name="Weber N."/>
            <person name="Wedler E."/>
            <person name="Wedler H."/>
            <person name="Wipfli P."/>
            <person name="Wolf K."/>
            <person name="Wright L.F."/>
            <person name="Zaccaria P."/>
            <person name="Zimmermann M."/>
            <person name="Zollner A."/>
            <person name="Kleine K."/>
        </authorList>
    </citation>
    <scope>NUCLEOTIDE SEQUENCE [LARGE SCALE GENOMIC DNA]</scope>
    <source>
        <strain>ATCC 204508 / S288c</strain>
    </source>
</reference>
<reference key="4">
    <citation type="journal article" date="2014" name="G3 (Bethesda)">
        <title>The reference genome sequence of Saccharomyces cerevisiae: Then and now.</title>
        <authorList>
            <person name="Engel S.R."/>
            <person name="Dietrich F.S."/>
            <person name="Fisk D.G."/>
            <person name="Binkley G."/>
            <person name="Balakrishnan R."/>
            <person name="Costanzo M.C."/>
            <person name="Dwight S.S."/>
            <person name="Hitz B.C."/>
            <person name="Karra K."/>
            <person name="Nash R.S."/>
            <person name="Weng S."/>
            <person name="Wong E.D."/>
            <person name="Lloyd P."/>
            <person name="Skrzypek M.S."/>
            <person name="Miyasato S.R."/>
            <person name="Simison M."/>
            <person name="Cherry J.M."/>
        </authorList>
    </citation>
    <scope>GENOME REANNOTATION</scope>
    <source>
        <strain>ATCC 204508 / S288c</strain>
    </source>
</reference>
<reference key="5">
    <citation type="journal article" date="2006" name="Proc. Natl. Acad. Sci. U.S.A.">
        <title>A global topology map of the Saccharomyces cerevisiae membrane proteome.</title>
        <authorList>
            <person name="Kim H."/>
            <person name="Melen K."/>
            <person name="Oesterberg M."/>
            <person name="von Heijne G."/>
        </authorList>
    </citation>
    <scope>TOPOLOGY [LARGE SCALE ANALYSIS]</scope>
    <source>
        <strain>ATCC 208353 / W303-1A</strain>
    </source>
</reference>
<dbReference type="EMBL" id="X91489">
    <property type="protein sequence ID" value="CAA62788.1"/>
    <property type="molecule type" value="Genomic_DNA"/>
</dbReference>
<dbReference type="EMBL" id="Z72708">
    <property type="protein sequence ID" value="CAA96898.1"/>
    <property type="molecule type" value="Genomic_DNA"/>
</dbReference>
<dbReference type="EMBL" id="BK006941">
    <property type="protein sequence ID" value="DAA07929.1"/>
    <property type="molecule type" value="Genomic_DNA"/>
</dbReference>
<dbReference type="PIR" id="S61131">
    <property type="entry name" value="S61131"/>
</dbReference>
<dbReference type="RefSeq" id="NP_011329.1">
    <property type="nucleotide sequence ID" value="NM_001181051.1"/>
</dbReference>
<dbReference type="BioGRID" id="33069">
    <property type="interactions" value="70"/>
</dbReference>
<dbReference type="FunCoup" id="P53099">
    <property type="interactions" value="71"/>
</dbReference>
<dbReference type="IntAct" id="P53099">
    <property type="interactions" value="10"/>
</dbReference>
<dbReference type="STRING" id="4932.YGL186C"/>
<dbReference type="TCDB" id="2.A.39.2.2">
    <property type="family name" value="the nucleobase:cation symporter-1 (ncs1) family"/>
</dbReference>
<dbReference type="iPTMnet" id="P53099"/>
<dbReference type="PaxDb" id="4932-YGL186C"/>
<dbReference type="PeptideAtlas" id="P53099"/>
<dbReference type="EnsemblFungi" id="YGL186C_mRNA">
    <property type="protein sequence ID" value="YGL186C"/>
    <property type="gene ID" value="YGL186C"/>
</dbReference>
<dbReference type="GeneID" id="852689"/>
<dbReference type="KEGG" id="sce:YGL186C"/>
<dbReference type="AGR" id="SGD:S000003154"/>
<dbReference type="SGD" id="S000003154">
    <property type="gene designation" value="TPN1"/>
</dbReference>
<dbReference type="VEuPathDB" id="FungiDB:YGL186C"/>
<dbReference type="eggNOG" id="ENOG502QR29">
    <property type="taxonomic scope" value="Eukaryota"/>
</dbReference>
<dbReference type="GeneTree" id="ENSGT00940000176331"/>
<dbReference type="HOGENOM" id="CLU_026016_2_1_1"/>
<dbReference type="InParanoid" id="P53099"/>
<dbReference type="OMA" id="YERWAWV"/>
<dbReference type="OrthoDB" id="5428495at2759"/>
<dbReference type="BioCyc" id="MetaCyc:G3O-30671-MONOMER"/>
<dbReference type="BioCyc" id="YEAST:G3O-30671-MONOMER"/>
<dbReference type="BioGRID-ORCS" id="852689">
    <property type="hits" value="0 hits in 10 CRISPR screens"/>
</dbReference>
<dbReference type="PRO" id="PR:P53099"/>
<dbReference type="Proteomes" id="UP000002311">
    <property type="component" value="Chromosome VII"/>
</dbReference>
<dbReference type="RNAct" id="P53099">
    <property type="molecule type" value="protein"/>
</dbReference>
<dbReference type="GO" id="GO:0000324">
    <property type="term" value="C:fungal-type vacuole"/>
    <property type="evidence" value="ECO:0007005"/>
    <property type="project" value="SGD"/>
</dbReference>
<dbReference type="GO" id="GO:0005886">
    <property type="term" value="C:plasma membrane"/>
    <property type="evidence" value="ECO:0000314"/>
    <property type="project" value="SGD"/>
</dbReference>
<dbReference type="GO" id="GO:0022857">
    <property type="term" value="F:transmembrane transporter activity"/>
    <property type="evidence" value="ECO:0000318"/>
    <property type="project" value="GO_Central"/>
</dbReference>
<dbReference type="GO" id="GO:0090482">
    <property type="term" value="F:vitamin transmembrane transporter activity"/>
    <property type="evidence" value="ECO:0000314"/>
    <property type="project" value="SGD"/>
</dbReference>
<dbReference type="GO" id="GO:0051180">
    <property type="term" value="P:vitamin transport"/>
    <property type="evidence" value="ECO:0000314"/>
    <property type="project" value="SGD"/>
</dbReference>
<dbReference type="CDD" id="cd11484">
    <property type="entry name" value="SLC-NCS1sbd_CobB-like"/>
    <property type="match status" value="1"/>
</dbReference>
<dbReference type="FunFam" id="1.10.4160.10:FF:000007">
    <property type="entry name" value="Pyridoxine transporter"/>
    <property type="match status" value="1"/>
</dbReference>
<dbReference type="Gene3D" id="1.10.4160.10">
    <property type="entry name" value="Hydantoin permease"/>
    <property type="match status" value="1"/>
</dbReference>
<dbReference type="InterPro" id="IPR012681">
    <property type="entry name" value="NCS1"/>
</dbReference>
<dbReference type="InterPro" id="IPR001248">
    <property type="entry name" value="Pur-cyt_permease"/>
</dbReference>
<dbReference type="InterPro" id="IPR026030">
    <property type="entry name" value="Pur-cyt_permease_Fcy2/21/22"/>
</dbReference>
<dbReference type="NCBIfam" id="TIGR00800">
    <property type="entry name" value="ncs1"/>
    <property type="match status" value="1"/>
</dbReference>
<dbReference type="PANTHER" id="PTHR31806">
    <property type="entry name" value="PURINE-CYTOSINE PERMEASE FCY2-RELATED"/>
    <property type="match status" value="1"/>
</dbReference>
<dbReference type="PANTHER" id="PTHR31806:SF17">
    <property type="entry name" value="VITAMIN B6 TRANSPORTER TPN1"/>
    <property type="match status" value="1"/>
</dbReference>
<dbReference type="Pfam" id="PF02133">
    <property type="entry name" value="Transp_cyt_pur"/>
    <property type="match status" value="1"/>
</dbReference>
<dbReference type="PIRSF" id="PIRSF002744">
    <property type="entry name" value="Pur-cyt_permease"/>
    <property type="match status" value="1"/>
</dbReference>
<protein>
    <recommendedName>
        <fullName>Vitamin B6 transporter TPN1</fullName>
    </recommendedName>
    <alternativeName>
        <fullName>Transport of pyridoxine protein 1</fullName>
    </alternativeName>
</protein>
<organism>
    <name type="scientific">Saccharomyces cerevisiae (strain ATCC 204508 / S288c)</name>
    <name type="common">Baker's yeast</name>
    <dbReference type="NCBI Taxonomy" id="559292"/>
    <lineage>
        <taxon>Eukaryota</taxon>
        <taxon>Fungi</taxon>
        <taxon>Dikarya</taxon>
        <taxon>Ascomycota</taxon>
        <taxon>Saccharomycotina</taxon>
        <taxon>Saccharomycetes</taxon>
        <taxon>Saccharomycetales</taxon>
        <taxon>Saccharomycetaceae</taxon>
        <taxon>Saccharomyces</taxon>
    </lineage>
</organism>
<name>TPN1_YEAST</name>
<gene>
    <name type="primary">TPN1</name>
    <name type="ordered locus">YGL186C</name>
    <name type="ORF">G1370</name>
</gene>
<keyword id="KW-0472">Membrane</keyword>
<keyword id="KW-1185">Reference proteome</keyword>
<keyword id="KW-0812">Transmembrane</keyword>
<keyword id="KW-1133">Transmembrane helix</keyword>
<keyword id="KW-0813">Transport</keyword>
<sequence>MNRDNMDTTKRKEDHTKHTTDVIEFYEEGTAASSLNIATEKANSSPSILRRIINRAAWLSKKVDAMGVESTGIQRISPYERGTSKKQFLHVAGLWLSATGGLSSMSSFLLGPLLFGLSFRESVASSLISVTIGCLIAAYCSIMGPQSGCRQMVTARYLFGWWFVKLVALASIIGVMGWSVVNSVVGGEMLAAISNDKVPLWVGIVIVTVCSFLVAIFGIKQVIKVETYLSVPVLTAFLLLYISSSDKYSFVNAYVSKGNLDSSTRKGNWMSFFSLCYSITATWGSITADYYILFPEDTPYIQIFCLTFFGTFLPTCFVGILGLLLASVAMSYKPWSVEYDSHGMGGLLWAGFQRWNGFGKFCVVVLVFSLVSNNIINTYSAAFSIQLSSVFCAKIPRWFWSIVCTIICLVCALIGRNHFSTILGNFLPMIGYWISMYFILLFEENLVFRRFFLHLYTKEFPTVTGEINGPELVGSSKEVEKDAVTNIHLLKRKHKVTKHRYNWDKWEDYEVLTHGYAATFAFIVGVAGVVVGMAQAYWIGPIAAKFGEYGGDVAMWLSMAFSGVVYPPCRYLELRKFGR</sequence>
<accession>P53099</accession>
<accession>D6VTW8</accession>
<comment type="function">
    <text evidence="2">Thiamine-regulated, high affinity import carrier of pyridoxine, pyridoxal and pyridoxamine.</text>
</comment>
<comment type="subcellular location">
    <subcellularLocation>
        <location evidence="2">Membrane</location>
        <topology evidence="2">Multi-pass membrane protein</topology>
    </subcellularLocation>
</comment>
<comment type="similarity">
    <text evidence="3">Belongs to the purine-cytosine permease (2.A.39) family.</text>
</comment>
<evidence type="ECO:0000255" key="1"/>
<evidence type="ECO:0000269" key="2">
    <source>
    </source>
</evidence>
<evidence type="ECO:0000305" key="3"/>